<gene>
    <name evidence="1" type="primary">rpl20</name>
</gene>
<reference key="1">
    <citation type="journal article" date="2007" name="Mol. Biol. Evol.">
        <title>Chloroplast genome (cpDNA) of Cycas taitungensis and 56 cp protein-coding genes of Gnetum parvifolium: insights into cpDNA evolution and phylogeny of extant seed plants.</title>
        <authorList>
            <person name="Wu C.-S."/>
            <person name="Wang Y.-N."/>
            <person name="Liu S.-M."/>
            <person name="Chaw S.-M."/>
        </authorList>
    </citation>
    <scope>NUCLEOTIDE SEQUENCE [LARGE SCALE GENOMIC DNA]</scope>
</reference>
<sequence>MTRIKRGYIARKRRKKILAFASGFRGAHSKLFRTADQQKIRALVSAHRDRSKRKRDLRRLWITRINAAARNNGVSYNKFIRYLYKRQLLSNRRILAQIAVLDKNCFSTIINNIIE</sequence>
<protein>
    <recommendedName>
        <fullName evidence="1">Large ribosomal subunit protein bL20c</fullName>
    </recommendedName>
    <alternativeName>
        <fullName evidence="2">50S ribosomal protein L20, chloroplastic</fullName>
    </alternativeName>
</protein>
<name>RK20_CYCTA</name>
<accession>A6H5K5</accession>
<evidence type="ECO:0000255" key="1">
    <source>
        <dbReference type="HAMAP-Rule" id="MF_00382"/>
    </source>
</evidence>
<evidence type="ECO:0000305" key="2"/>
<proteinExistence type="inferred from homology"/>
<dbReference type="EMBL" id="AP009339">
    <property type="protein sequence ID" value="BAF64971.1"/>
    <property type="molecule type" value="Genomic_DNA"/>
</dbReference>
<dbReference type="RefSeq" id="YP_001312230.1">
    <property type="nucleotide sequence ID" value="NC_009618.1"/>
</dbReference>
<dbReference type="SMR" id="A6H5K5"/>
<dbReference type="GeneID" id="5309603"/>
<dbReference type="GO" id="GO:0009507">
    <property type="term" value="C:chloroplast"/>
    <property type="evidence" value="ECO:0007669"/>
    <property type="project" value="UniProtKB-SubCell"/>
</dbReference>
<dbReference type="GO" id="GO:1990904">
    <property type="term" value="C:ribonucleoprotein complex"/>
    <property type="evidence" value="ECO:0007669"/>
    <property type="project" value="UniProtKB-KW"/>
</dbReference>
<dbReference type="GO" id="GO:0005840">
    <property type="term" value="C:ribosome"/>
    <property type="evidence" value="ECO:0007669"/>
    <property type="project" value="UniProtKB-KW"/>
</dbReference>
<dbReference type="GO" id="GO:0019843">
    <property type="term" value="F:rRNA binding"/>
    <property type="evidence" value="ECO:0007669"/>
    <property type="project" value="UniProtKB-UniRule"/>
</dbReference>
<dbReference type="GO" id="GO:0003735">
    <property type="term" value="F:structural constituent of ribosome"/>
    <property type="evidence" value="ECO:0007669"/>
    <property type="project" value="InterPro"/>
</dbReference>
<dbReference type="GO" id="GO:0000027">
    <property type="term" value="P:ribosomal large subunit assembly"/>
    <property type="evidence" value="ECO:0007669"/>
    <property type="project" value="UniProtKB-UniRule"/>
</dbReference>
<dbReference type="GO" id="GO:0006412">
    <property type="term" value="P:translation"/>
    <property type="evidence" value="ECO:0007669"/>
    <property type="project" value="InterPro"/>
</dbReference>
<dbReference type="CDD" id="cd07026">
    <property type="entry name" value="Ribosomal_L20"/>
    <property type="match status" value="1"/>
</dbReference>
<dbReference type="FunFam" id="1.10.1900.20:FF:000001">
    <property type="entry name" value="50S ribosomal protein L20"/>
    <property type="match status" value="1"/>
</dbReference>
<dbReference type="Gene3D" id="6.10.160.10">
    <property type="match status" value="1"/>
</dbReference>
<dbReference type="Gene3D" id="1.10.1900.20">
    <property type="entry name" value="Ribosomal protein L20"/>
    <property type="match status" value="1"/>
</dbReference>
<dbReference type="HAMAP" id="MF_00382">
    <property type="entry name" value="Ribosomal_bL20"/>
    <property type="match status" value="1"/>
</dbReference>
<dbReference type="InterPro" id="IPR005813">
    <property type="entry name" value="Ribosomal_bL20"/>
</dbReference>
<dbReference type="InterPro" id="IPR049946">
    <property type="entry name" value="RIBOSOMAL_L20_CS"/>
</dbReference>
<dbReference type="InterPro" id="IPR035566">
    <property type="entry name" value="Ribosomal_protein_bL20_C"/>
</dbReference>
<dbReference type="NCBIfam" id="TIGR01032">
    <property type="entry name" value="rplT_bact"/>
    <property type="match status" value="1"/>
</dbReference>
<dbReference type="PANTHER" id="PTHR10986">
    <property type="entry name" value="39S RIBOSOMAL PROTEIN L20"/>
    <property type="match status" value="1"/>
</dbReference>
<dbReference type="Pfam" id="PF00453">
    <property type="entry name" value="Ribosomal_L20"/>
    <property type="match status" value="1"/>
</dbReference>
<dbReference type="PRINTS" id="PR00062">
    <property type="entry name" value="RIBOSOMALL20"/>
</dbReference>
<dbReference type="SUPFAM" id="SSF74731">
    <property type="entry name" value="Ribosomal protein L20"/>
    <property type="match status" value="1"/>
</dbReference>
<dbReference type="PROSITE" id="PS00937">
    <property type="entry name" value="RIBOSOMAL_L20"/>
    <property type="match status" value="1"/>
</dbReference>
<geneLocation type="chloroplast"/>
<comment type="function">
    <text evidence="1">Binds directly to 23S ribosomal RNA and is necessary for the in vitro assembly process of the 50S ribosomal subunit. It is not involved in the protein synthesizing functions of that subunit.</text>
</comment>
<comment type="subcellular location">
    <subcellularLocation>
        <location>Plastid</location>
        <location>Chloroplast</location>
    </subcellularLocation>
</comment>
<comment type="similarity">
    <text evidence="1">Belongs to the bacterial ribosomal protein bL20 family.</text>
</comment>
<keyword id="KW-0150">Chloroplast</keyword>
<keyword id="KW-0934">Plastid</keyword>
<keyword id="KW-0687">Ribonucleoprotein</keyword>
<keyword id="KW-0689">Ribosomal protein</keyword>
<keyword id="KW-0694">RNA-binding</keyword>
<keyword id="KW-0699">rRNA-binding</keyword>
<organism>
    <name type="scientific">Cycas taitungensis</name>
    <name type="common">Prince sago</name>
    <name type="synonym">Cycas taiwaniana</name>
    <dbReference type="NCBI Taxonomy" id="54799"/>
    <lineage>
        <taxon>Eukaryota</taxon>
        <taxon>Viridiplantae</taxon>
        <taxon>Streptophyta</taxon>
        <taxon>Embryophyta</taxon>
        <taxon>Tracheophyta</taxon>
        <taxon>Spermatophyta</taxon>
        <taxon>Cycadidae</taxon>
        <taxon>Cycadales</taxon>
        <taxon>Cycadaceae</taxon>
        <taxon>Cycas</taxon>
    </lineage>
</organism>
<feature type="chain" id="PRO_0000355500" description="Large ribosomal subunit protein bL20c">
    <location>
        <begin position="1"/>
        <end position="115"/>
    </location>
</feature>